<accession>Q9IFX1</accession>
<organism>
    <name type="scientific">Human astrovirus-8</name>
    <name type="common">HAstV-8</name>
    <dbReference type="NCBI Taxonomy" id="43358"/>
    <lineage>
        <taxon>Viruses</taxon>
        <taxon>Riboviria</taxon>
        <taxon>Orthornavirae</taxon>
        <taxon>Pisuviricota</taxon>
        <taxon>Stelpaviricetes</taxon>
        <taxon>Stellavirales</taxon>
        <taxon>Astroviridae</taxon>
        <taxon>Mamastrovirus</taxon>
        <taxon>Mamastrovirus 1</taxon>
    </lineage>
</organism>
<gene>
    <name type="ORF">ORF2</name>
</gene>
<name>CAPSD_HASV8</name>
<comment type="function">
    <molecule>Capsid polyprotein VP90</molecule>
    <text evidence="6 7 8">The capsid polyprotein VP90 self-assembles and undergoes a proteolytic cleavage by host caspases to yield the immature VP70 virion.</text>
</comment>
<comment type="function">
    <molecule>Capsid polyprotein VP70</molecule>
    <text evidence="6 7 8">The immature virion is composed of 180 VP70 subunits with 90 dimeric spikes and displays a T=3 icosahedral symmetry (PubMed:21768348, PubMed:22743104, PubMed:24335315). During maturation, VP70 undergoes a loss of 60 peripentonal spikes, which likely plays an important role in viral infectivity (PubMed:22743104).</text>
</comment>
<comment type="function">
    <molecule>Core protein VP34</molecule>
    <text evidence="6 7 8">Self-assembles to form an icosahedral capsid with a T=3 symmetry, about 43 nm in diameter (PubMed:22743104). This forms contains only 30 spikes located on the icosahedral 2-fold axes (PubMed:21768348, PubMed:24335315).</text>
</comment>
<comment type="function">
    <molecule>Spike protein VP27</molecule>
    <text evidence="6 7 8 12">VP25 and VP27 Forms the spikes at the surface of the virion (PubMed:22743104). This forms contains only 30 spikes located on the icosahedral 2-fold axes. Plays a role in the attachment to target host cell (Probable). This attachment induces virion internalization through clathrin-dependent endocytosis (PubMed:21768348, PubMed:24335315).</text>
</comment>
<comment type="function">
    <molecule>Spike protein VP25</molecule>
    <text evidence="6 7 8 10">VP25 and VP27 Forms the spikes at the surface of the virion (PubMed:22743104). This forms contains only 30 spikes located on the icosahedral 2-fold axes (PubMed:22743104). Plays a role in the attachment to target host cell (PubMed:33396308). This attachment induces virion internalization through clathrin-dependent endocytosis (PubMed:21768348, PubMed:24335315).</text>
</comment>
<comment type="subunit">
    <molecule>Spike protein VP27</molecule>
    <text evidence="6">Heterodimer with spike protein VP25 (PubMed:21768348). The spikes form a globular dimer with 30 spikes covering the mature virion (PubMed:21768348). Spike protein VP25 that lacks the core attachment region may need to dimerize with spike protein VP27 to remain stably bound to the viral particle (PubMed:21768348).</text>
</comment>
<comment type="subunit">
    <molecule>Spike protein VP25</molecule>
    <text evidence="6 10">Heterodimer with spike protein VP27 (PubMed:21768348). The spikes form a globular dimer with 30 spikes covering the mature virion (PubMed:21768348). Spike protein VP25 that lacks the core attachment region may need to dimerize with spike protein VP27 to remain stably bound to the viral particle (PubMed:21768348). Interacts with host PDIA4; this interaction seems to facilitate the uncoating during virus entry into the host cell (PubMed:33396308).</text>
</comment>
<comment type="interaction">
    <interactant intactId="EBI-15936945">
        <id>Q9IFX1</id>
    </interactant>
    <interactant intactId="EBI-15936945">
        <id>Q9IFX1</id>
        <label>ORF2</label>
    </interactant>
    <organismsDiffer>false</organismsDiffer>
    <experiments>2</experiments>
</comment>
<comment type="subcellular location">
    <molecule>Capsid polyprotein VP90</molecule>
    <subcellularLocation>
        <location evidence="9">Virion</location>
    </subcellularLocation>
    <text evidence="9">Immature capsid.</text>
</comment>
<comment type="subcellular location">
    <molecule>Capsid polyprotein VP70</molecule>
    <subcellularLocation>
        <location evidence="7">Virion</location>
    </subcellularLocation>
    <text evidence="7">Immature capsid after cleavage by host caspases.</text>
</comment>
<comment type="subcellular location">
    <molecule>Core protein VP34</molecule>
    <subcellularLocation>
        <location evidence="1">Virion</location>
    </subcellularLocation>
    <text evidence="1">Capsid.</text>
</comment>
<comment type="subcellular location">
    <molecule>Spike protein VP27</molecule>
    <subcellularLocation>
        <location evidence="1">Virion</location>
    </subcellularLocation>
    <text evidence="1">Capsid.</text>
</comment>
<comment type="subcellular location">
    <molecule>Spike protein VP25</molecule>
    <subcellularLocation>
        <location evidence="1">Host extracellular space</location>
    </subcellularLocation>
    <subcellularLocation>
        <location evidence="1">Virion</location>
    </subcellularLocation>
    <text evidence="1 12">Capsid (By similarity). Spike protein VP25 that lacks the core attachment region may need to dimerize with spike protein VP27 to remain stably bound to the viral particle (Probable).</text>
</comment>
<comment type="domain">
    <molecule>Spike protein VP27</molecule>
    <text evidence="6">Contains the core attachment region and the P2 globular region.</text>
</comment>
<comment type="domain">
    <molecule>Spike protein VP25</molecule>
    <text evidence="6">Contains the P2 globular region (PubMed:21768348). The core attachment region is lost by cleavage (PubMed:21768348).</text>
</comment>
<comment type="domain">
    <molecule>Capsid polyprotein VP70</molecule>
    <text evidence="11">Contains a lipid disrupting region that is exposed after trypsin treatment.</text>
</comment>
<comment type="PTM">
    <molecule>Capsid polyprotein VP90</molecule>
    <text evidence="5 7 13">Specific enzymatic cleavages by the host yield mature proteins. VP90 acidic C-terminal domain is eliminated from the immature virion by host caspases during viral maturation giving rise to virions composed of VP70 (Probable) (PubMed:22743104). The virus can then dissociate from cellular membranes and exit the cell (Probable). Further cleavages by host extracellular proteases occur resulting in the three structural proteins VP34, VP27 and VP25 and conferring infectivity (PubMed:15280469).</text>
</comment>
<comment type="similarity">
    <text evidence="12">Belongs to the astroviridae capsid polyprotein family.</text>
</comment>
<comment type="sequence caution" evidence="12">
    <conflict type="erroneous initiation">
        <sequence resource="EMBL-CDS" id="AAF85964"/>
    </conflict>
    <text>Extended N-terminus.</text>
</comment>
<keyword id="KW-0002">3D-structure</keyword>
<keyword id="KW-0167">Capsid protein</keyword>
<keyword id="KW-1165">Clathrin-mediated endocytosis of virus by host</keyword>
<keyword id="KW-0903">Direct protein sequencing</keyword>
<keyword id="KW-1142">T=3 icosahedral capsid protein</keyword>
<keyword id="KW-1162">Viral penetration into host cytoplasm</keyword>
<keyword id="KW-0946">Virion</keyword>
<keyword id="KW-1164">Virus endocytosis by host</keyword>
<keyword id="KW-1160">Virus entry into host cell</keyword>
<feature type="chain" id="PRO_0000320238" description="Capsid polyprotein VP90">
    <location>
        <begin position="1"/>
        <end position="782"/>
    </location>
</feature>
<feature type="chain" id="PRO_0000419582" description="Capsid polyprotein VP70">
    <location>
        <begin position="1"/>
        <end position="657"/>
    </location>
</feature>
<feature type="chain" id="PRO_0000419583" description="Core protein VP34">
    <location>
        <begin position="1"/>
        <end position="313"/>
    </location>
</feature>
<feature type="chain" id="PRO_0000419584" description="Spike protein VP27">
    <location>
        <begin position="394"/>
        <end position="648"/>
    </location>
</feature>
<feature type="chain" id="PRO_0000419585" description="Spike protein VP25">
    <location>
        <begin position="424"/>
        <end position="648"/>
    </location>
</feature>
<feature type="region of interest" description="Basic" evidence="6">
    <location>
        <begin position="1"/>
        <end position="70"/>
    </location>
</feature>
<feature type="region of interest" description="Disordered" evidence="3">
    <location>
        <begin position="1"/>
        <end position="59"/>
    </location>
</feature>
<feature type="region of interest" description="Inner core" evidence="6">
    <location>
        <begin position="71"/>
        <end position="263"/>
    </location>
</feature>
<feature type="region of interest" description="Lipid disruption activity" evidence="11">
    <location>
        <begin position="274"/>
        <end position="313"/>
    </location>
</feature>
<feature type="region of interest" description="Core attachment" evidence="6">
    <location>
        <begin position="394"/>
        <end position="423"/>
    </location>
</feature>
<feature type="region of interest" description="P2 globular domain" evidence="6">
    <location>
        <begin position="424"/>
        <end position="648"/>
    </location>
</feature>
<feature type="region of interest" description="Disordered" evidence="3">
    <location>
        <begin position="648"/>
        <end position="702"/>
    </location>
</feature>
<feature type="region of interest" description="Acidic" evidence="6">
    <location>
        <begin position="649"/>
        <end position="782"/>
    </location>
</feature>
<feature type="compositionally biased region" description="Basic residues" evidence="3">
    <location>
        <begin position="19"/>
        <end position="35"/>
    </location>
</feature>
<feature type="compositionally biased region" description="Acidic residues" evidence="3">
    <location>
        <begin position="664"/>
        <end position="684"/>
    </location>
</feature>
<feature type="compositionally biased region" description="Basic and acidic residues" evidence="3">
    <location>
        <begin position="685"/>
        <end position="694"/>
    </location>
</feature>
<feature type="site" description="Cleavage; by host extracellular proteases" evidence="15">
    <location>
        <begin position="313"/>
        <end position="314"/>
    </location>
</feature>
<feature type="site" description="Cleavage; by host extracellular proteasestrypsin" evidence="4 15">
    <location>
        <begin position="393"/>
        <end position="394"/>
    </location>
</feature>
<feature type="site" description="Cleavage; by host extracellular proteases" evidence="4">
    <location>
        <begin position="423"/>
        <end position="424"/>
    </location>
</feature>
<feature type="site" description="Cleavage" evidence="14">
    <location>
        <begin position="648"/>
        <end position="649"/>
    </location>
</feature>
<feature type="site" description="Cleavage" evidence="2">
    <location>
        <begin position="657"/>
        <end position="658"/>
    </location>
</feature>
<feature type="strand" evidence="21">
    <location>
        <begin position="80"/>
        <end position="93"/>
    </location>
</feature>
<feature type="strand" evidence="21">
    <location>
        <begin position="96"/>
        <end position="99"/>
    </location>
</feature>
<feature type="strand" evidence="21">
    <location>
        <begin position="101"/>
        <end position="107"/>
    </location>
</feature>
<feature type="turn" evidence="21">
    <location>
        <begin position="110"/>
        <end position="112"/>
    </location>
</feature>
<feature type="helix" evidence="21">
    <location>
        <begin position="122"/>
        <end position="131"/>
    </location>
</feature>
<feature type="strand" evidence="21">
    <location>
        <begin position="132"/>
        <end position="148"/>
    </location>
</feature>
<feature type="turn" evidence="21">
    <location>
        <begin position="150"/>
        <end position="152"/>
    </location>
</feature>
<feature type="strand" evidence="21">
    <location>
        <begin position="153"/>
        <end position="155"/>
    </location>
</feature>
<feature type="strand" evidence="21">
    <location>
        <begin position="157"/>
        <end position="165"/>
    </location>
</feature>
<feature type="helix" evidence="21">
    <location>
        <begin position="172"/>
        <end position="178"/>
    </location>
</feature>
<feature type="strand" evidence="21">
    <location>
        <begin position="179"/>
        <end position="185"/>
    </location>
</feature>
<feature type="strand" evidence="21">
    <location>
        <begin position="190"/>
        <end position="194"/>
    </location>
</feature>
<feature type="helix" evidence="21">
    <location>
        <begin position="196"/>
        <end position="199"/>
    </location>
</feature>
<feature type="strand" evidence="21">
    <location>
        <begin position="201"/>
        <end position="208"/>
    </location>
</feature>
<feature type="helix" evidence="21">
    <location>
        <begin position="215"/>
        <end position="217"/>
    </location>
</feature>
<feature type="strand" evidence="21">
    <location>
        <begin position="222"/>
        <end position="229"/>
    </location>
</feature>
<feature type="turn" evidence="21">
    <location>
        <begin position="234"/>
        <end position="236"/>
    </location>
</feature>
<feature type="strand" evidence="21">
    <location>
        <begin position="242"/>
        <end position="258"/>
    </location>
</feature>
<feature type="strand" evidence="21">
    <location>
        <begin position="269"/>
        <end position="275"/>
    </location>
</feature>
<feature type="strand" evidence="21">
    <location>
        <begin position="278"/>
        <end position="280"/>
    </location>
</feature>
<feature type="strand" evidence="21">
    <location>
        <begin position="288"/>
        <end position="291"/>
    </location>
</feature>
<feature type="helix" evidence="21">
    <location>
        <begin position="296"/>
        <end position="304"/>
    </location>
</feature>
<feature type="strand" evidence="21">
    <location>
        <begin position="309"/>
        <end position="311"/>
    </location>
</feature>
<feature type="turn" evidence="21">
    <location>
        <begin position="313"/>
        <end position="315"/>
    </location>
</feature>
<feature type="strand" evidence="21">
    <location>
        <begin position="318"/>
        <end position="328"/>
    </location>
</feature>
<feature type="turn" evidence="21">
    <location>
        <begin position="340"/>
        <end position="342"/>
    </location>
</feature>
<feature type="helix" evidence="21">
    <location>
        <begin position="343"/>
        <end position="348"/>
    </location>
</feature>
<feature type="strand" evidence="21">
    <location>
        <begin position="350"/>
        <end position="356"/>
    </location>
</feature>
<feature type="strand" evidence="21">
    <location>
        <begin position="362"/>
        <end position="372"/>
    </location>
</feature>
<feature type="helix" evidence="21">
    <location>
        <begin position="373"/>
        <end position="377"/>
    </location>
</feature>
<feature type="strand" evidence="21">
    <location>
        <begin position="400"/>
        <end position="406"/>
    </location>
</feature>
<feature type="strand" evidence="20">
    <location>
        <begin position="431"/>
        <end position="438"/>
    </location>
</feature>
<feature type="strand" evidence="20">
    <location>
        <begin position="466"/>
        <end position="471"/>
    </location>
</feature>
<feature type="strand" evidence="20">
    <location>
        <begin position="474"/>
        <end position="477"/>
    </location>
</feature>
<feature type="strand" evidence="20">
    <location>
        <begin position="480"/>
        <end position="491"/>
    </location>
</feature>
<feature type="strand" evidence="20">
    <location>
        <begin position="507"/>
        <end position="510"/>
    </location>
</feature>
<feature type="strand" evidence="20">
    <location>
        <begin position="513"/>
        <end position="529"/>
    </location>
</feature>
<feature type="strand" evidence="20">
    <location>
        <begin position="532"/>
        <end position="545"/>
    </location>
</feature>
<feature type="strand" evidence="20">
    <location>
        <begin position="547"/>
        <end position="554"/>
    </location>
</feature>
<feature type="strand" evidence="22">
    <location>
        <begin position="556"/>
        <end position="558"/>
    </location>
</feature>
<feature type="strand" evidence="20">
    <location>
        <begin position="569"/>
        <end position="571"/>
    </location>
</feature>
<feature type="strand" evidence="20">
    <location>
        <begin position="576"/>
        <end position="582"/>
    </location>
</feature>
<feature type="strand" evidence="20">
    <location>
        <begin position="587"/>
        <end position="599"/>
    </location>
</feature>
<feature type="turn" evidence="20">
    <location>
        <begin position="621"/>
        <end position="625"/>
    </location>
</feature>
<feature type="strand" evidence="20">
    <location>
        <begin position="626"/>
        <end position="628"/>
    </location>
</feature>
<feature type="strand" evidence="20">
    <location>
        <begin position="635"/>
        <end position="643"/>
    </location>
</feature>
<proteinExistence type="evidence at protein level"/>
<sequence>MASKSDKQVTVEVNNNGRSRSKSRARSQSRGRGRSVKITVNSHNKGRRQNGRNKYQSNQRVRKIVNKQLRKQGVTGPKPAICQTATATLGTIGSNTTGATEIEACILLNPVLVKDATGSTQFGPVQALGAQYSMWKLKYLNVRLTSMVGASAVNGTVVRISLNPTSTPSSTSWSGLGARKHLDVTVGKNAVFKLKPSDLGGPRDGWWLTNTNDNASDTLGPSIEIHTLGQTMSSYQNTQFTGGLFLVELSSAWCFTGYAANPNLVNLVKSTDKSVNVTFEGSAGTPLIMNVPEHSHFARTAVEHSSLSTSLSRAGGESSSDTVWQVLNTAVSAAELVTPPPFNWLVKGGWWFVKLIAGRARTGARRFYVYLSYQDALSNKPALCTGGVPASARQSNPVRTTLQFTQMNQPSLGHGATPMTFGRSIPEPGEQFRVLLTVGPPMAPNTANSQNWVNKTIVPPENQYTVKIGIDLEHYTTMQGFTPVESVSWYTADFQPSDEPSPIPGLYARVNNTKKADVYGVQQFKSSHTNNRHQITSVFLVRVTTSFQVINYTSYFIRGAESGSNVSNLKIRDQTYHTPLQFTQGKWYLLTSTVMHDGPTSSGWVWMNQELTNNIAYRVDPGMMYLITPPPAASQLYFELHTVLPQARSEEPETYVDAPLPEEPPIEEEETDSDFESTEDENDEVDRFDLHPSSESDDDDVENDRATLLSTLLNQGISVERATRITNGAFPTRAARVRRSVYNDLLVSGLSPGAAWSHACEQARRAGDNHDLQLSGSRDHAE</sequence>
<organismHost>
    <name type="scientific">Homo sapiens</name>
    <name type="common">Human</name>
    <dbReference type="NCBI Taxonomy" id="9606"/>
</organismHost>
<evidence type="ECO:0000250" key="1">
    <source>
        <dbReference type="UniProtKB" id="O12792"/>
    </source>
</evidence>
<evidence type="ECO:0000255" key="2"/>
<evidence type="ECO:0000256" key="3">
    <source>
        <dbReference type="SAM" id="MobiDB-lite"/>
    </source>
</evidence>
<evidence type="ECO:0000269" key="4">
    <source>
    </source>
</evidence>
<evidence type="ECO:0000269" key="5">
    <source>
    </source>
</evidence>
<evidence type="ECO:0000269" key="6">
    <source>
    </source>
</evidence>
<evidence type="ECO:0000269" key="7">
    <source>
    </source>
</evidence>
<evidence type="ECO:0000269" key="8">
    <source>
    </source>
</evidence>
<evidence type="ECO:0000269" key="9">
    <source>
    </source>
</evidence>
<evidence type="ECO:0000269" key="10">
    <source>
    </source>
</evidence>
<evidence type="ECO:0000269" key="11">
    <source>
    </source>
</evidence>
<evidence type="ECO:0000305" key="12"/>
<evidence type="ECO:0000305" key="13">
    <source>
    </source>
</evidence>
<evidence type="ECO:0000305" key="14">
    <source>
    </source>
</evidence>
<evidence type="ECO:0000305" key="15">
    <source>
    </source>
</evidence>
<evidence type="ECO:0007744" key="16">
    <source>
        <dbReference type="PDB" id="3QSQ"/>
    </source>
</evidence>
<evidence type="ECO:0007744" key="17">
    <source>
        <dbReference type="PDB" id="5IBV"/>
    </source>
</evidence>
<evidence type="ECO:0007744" key="18">
    <source>
        <dbReference type="PDB" id="7RK1"/>
    </source>
</evidence>
<evidence type="ECO:0007744" key="19">
    <source>
        <dbReference type="PDB" id="7RK2"/>
    </source>
</evidence>
<evidence type="ECO:0007829" key="20">
    <source>
        <dbReference type="PDB" id="3QSQ"/>
    </source>
</evidence>
<evidence type="ECO:0007829" key="21">
    <source>
        <dbReference type="PDB" id="5IBV"/>
    </source>
</evidence>
<evidence type="ECO:0007829" key="22">
    <source>
        <dbReference type="PDB" id="7RK1"/>
    </source>
</evidence>
<reference key="1">
    <citation type="journal article" date="2000" name="J. Gen. Virol.">
        <title>Molecular analysis of a serotype 8 human astrovirus genome.</title>
        <authorList>
            <person name="Mendez-Toss M."/>
            <person name="Romero-Guido P."/>
            <person name="Munguia M.E."/>
            <person name="Mendez E."/>
            <person name="Arias C.F."/>
        </authorList>
    </citation>
    <scope>NUCLEOTIDE SEQUENCE [GENOMIC RNA]</scope>
</reference>
<reference key="2">
    <citation type="journal article" date="2002" name="J. Virol.">
        <title>Proteolytic processing of a serotype 8 human astrovirus ORF2 polyprotein.</title>
        <authorList>
            <person name="Mendez E."/>
            <person name="Fernandez-Luna T."/>
            <person name="Lopez S."/>
            <person name="Mendez-Toss M."/>
            <person name="Arias C.F."/>
        </authorList>
    </citation>
    <scope>PROTEIN SEQUENCE OF 394-405 AND 424-435</scope>
    <scope>PROTEOLYTIC PROCESSING (CAPSID POLYPROTEIN VP90)</scope>
    <source>
        <strain>Yuc8</strain>
    </source>
</reference>
<reference key="3">
    <citation type="journal article" date="2004" name="J. Virol.">
        <title>Caspases mediate processing of the capsid precursor and cell release of human astroviruses.</title>
        <authorList>
            <person name="Mendez E."/>
            <person name="Salas-Ocampo E."/>
            <person name="Arias C.F."/>
        </authorList>
    </citation>
    <scope>PROTEOLYTIC PROCESSING (CAPSID POLYPROTEIN VP90)</scope>
</reference>
<reference key="4">
    <citation type="journal article" date="2010" name="Virology">
        <title>Role of individual caspases induced by astrovirus on the processing of its structural protein and its release from the cell through a non-lytic mechanism.</title>
        <authorList>
            <person name="Banos-Lara Mdel R."/>
            <person name="Mendez E."/>
        </authorList>
    </citation>
    <scope>PROTEOLYTIC CLEAVAGE BY HOST CAPSASES (CAPSID POLYPROTEIN VP90)</scope>
</reference>
<reference key="5">
    <citation type="journal article" date="2014" name="J. Virol.">
        <title>Characterization of human astrovirus cell entry.</title>
        <authorList>
            <person name="Mendez E."/>
            <person name="Munoz-Yanez C."/>
            <person name="Sanchez-San Martin C."/>
            <person name="Aguirre-Crespo G."/>
            <person name="Banos-Lara Mdel R."/>
            <person name="Gutierrez M."/>
            <person name="Espinosa R."/>
            <person name="Acevedo Y."/>
            <person name="Arias C.F."/>
            <person name="Lopez S."/>
        </authorList>
    </citation>
    <scope>FUNCTION (CORE PROTEIN VP34)</scope>
    <scope>FUNCTION (SPIKE PROTEIN VP25)</scope>
    <scope>FUNCTION (SPIKE PROTEIN VP27)</scope>
    <scope>FUNCTION (SPIKE PROTEIN VP90)</scope>
    <scope>FUNCTION (SPIKE PROTEIN VP70)</scope>
</reference>
<reference key="6">
    <citation type="journal article" date="2020" name="Viruses">
        <title>Protein Disulfide Isomerase A4 Is Involved in Genome Uncoating during Human Astrovirus Cell Entry.</title>
        <authorList>
            <person name="Aguilar-Hernandez N."/>
            <person name="Meyer L."/>
            <person name="Lopez S."/>
            <person name="DuBois R.M."/>
            <person name="Arias C.F."/>
        </authorList>
    </citation>
    <scope>INTERACTION WITH HOST PDIA4 (SPIKE PROTEIN VP25)</scope>
    <source>
        <strain>Yuc8</strain>
    </source>
</reference>
<reference key="7">
    <citation type="journal article" date="2021" name="Viruses">
        <title>Structural Insights into the Human Astrovirus Capsid.</title>
        <authorList>
            <person name="Ykema M."/>
            <person name="Tao Y.J."/>
        </authorList>
    </citation>
    <scope>REVIEW</scope>
</reference>
<reference key="8">
    <citation type="journal article" date="2023" name="J. Virol.">
        <title>Human astrovirus capsid protein releases a membrane lytic peptide upon trypsin maturation.</title>
        <authorList>
            <person name="Ykema M."/>
            <person name="Ye K."/>
            <person name="Xun M."/>
            <person name="Harper J."/>
            <person name="Betancourt-Solis M.A."/>
            <person name="Arias C.F."/>
            <person name="McNew J.A."/>
            <person name="Tao Y.J."/>
        </authorList>
    </citation>
    <scope>DOMAIN (CAPSID POLYPROTEIN VP70)</scope>
</reference>
<reference evidence="16" key="9">
    <citation type="journal article" date="2011" name="Proc. Natl. Acad. Sci. U.S.A.">
        <title>Crystal structure of the human astrovirus capsid spike.</title>
        <authorList>
            <person name="Dong J."/>
            <person name="Dong L."/>
            <person name="Mendez E."/>
            <person name="Tao Y."/>
        </authorList>
    </citation>
    <scope>X-RAY CRYSTALLOGRAPHY (1.8 ANGSTROMS) OF 415-646</scope>
    <scope>FUNCTION (CORE PROTEIN VP34)</scope>
    <scope>FUNCTION (SPIKE PROTEIN VP25)</scope>
    <scope>FUNCTION (SPIKE PROTEIN VP27)</scope>
    <scope>SUBUNIT (SPIKE PROTEIN VP25)</scope>
    <scope>SUBUNIT (SPIKE PROTEIN VP27)</scope>
    <scope>DOMAIN (SPIKE PROTEIN VP25)</scope>
    <scope>DOMAIN (SPIKE PROTEIN VP27)</scope>
</reference>
<reference key="10">
    <citation type="journal article" date="2012" name="J. Mol. Biol.">
        <title>Immature and mature human astrovirus: structure, conformational changes, and similarities to hepatitis E virus.</title>
        <authorList>
            <person name="Dryden K.A."/>
            <person name="Tihova M."/>
            <person name="Nowotny N."/>
            <person name="Matsui S.M."/>
            <person name="Mendez E."/>
            <person name="Yeager M."/>
        </authorList>
    </citation>
    <scope>STRUCTURE BY ELECTRON MICROSCOPY (25.0 ANGSTROMS) OF THE IMMATURE VIRION</scope>
    <scope>PROTEOLYTIC PROCESSING (CAPSID POLYPROTEIN VP70)</scope>
    <scope>FUNCTION (CAPSID POLYPROTEIN VP70)</scope>
    <scope>FUNCTION (CORE PROTEIN VP34)</scope>
    <scope>FUNCTION (SPIKE PROTEIN VP25)</scope>
    <scope>FUNCTION (SPIKE PROTEIN VP27)</scope>
    <scope>SUBCELLULAR LOCATION (CAPSID POLYPROTEIN VP70)</scope>
    <source>
        <strain>Yuc8</strain>
    </source>
</reference>
<reference evidence="17" key="11">
    <citation type="journal article" date="2016" name="J. Virol.">
        <title>Crystal Structure of the Human Astrovirus Capsid Protein.</title>
        <authorList>
            <person name="Toh Y."/>
            <person name="Harper J."/>
            <person name="Dryden K.A."/>
            <person name="Yeager M."/>
            <person name="Arias C.F."/>
            <person name="Mendez E."/>
            <person name="Tao Y.J."/>
        </authorList>
    </citation>
    <scope>X-RAY CRYSTALLOGRAPHY (2.15 ANGSTROMS) OF 71-416</scope>
    <scope>SUBCELLULAR LOCATION (POLYPROTEIN VP90)</scope>
    <scope>PROTEOLYTIC PROCESSING (CAPSID POLYPROTEIN VP90)</scope>
</reference>
<reference evidence="18 19" key="12">
    <citation type="journal article" date="2022" name="J. Virol.">
        <title>Structures of Two Human Astrovirus Capsid/Neutralizing Antibody Complexes Reveal Distinct Epitopes and Inhibition of Virus Attachment to Cells.</title>
        <authorList>
            <person name="Ricemeyer L."/>
            <person name="Aguilar-Hernandez N."/>
            <person name="Lopez T."/>
            <person name="Espinosa R."/>
            <person name="Lanning S."/>
            <person name="Mukherjee S."/>
            <person name="Cuellar C."/>
            <person name="Lopez S."/>
            <person name="Arias C.F."/>
            <person name="DuBois R.M."/>
        </authorList>
    </citation>
    <scope>X-RAY CRYSTALLOGRAPHY (2.05 ANGSTROMS) OF 429-647 IN COMPLEX WITH NEUTRALIZING ANTIBODIES</scope>
</reference>
<dbReference type="EMBL" id="AF260508">
    <property type="protein sequence ID" value="AAF85964.1"/>
    <property type="status" value="ALT_INIT"/>
    <property type="molecule type" value="Genomic_RNA"/>
</dbReference>
<dbReference type="PDB" id="3QSQ">
    <property type="method" value="X-ray"/>
    <property type="resolution" value="1.80 A"/>
    <property type="chains" value="A=415-646"/>
</dbReference>
<dbReference type="PDB" id="5IBV">
    <property type="method" value="X-ray"/>
    <property type="resolution" value="2.15 A"/>
    <property type="chains" value="A=71-415"/>
</dbReference>
<dbReference type="PDB" id="7RK1">
    <property type="method" value="X-ray"/>
    <property type="resolution" value="2.05 A"/>
    <property type="chains" value="A/B=429-647"/>
</dbReference>
<dbReference type="PDB" id="7RK2">
    <property type="method" value="X-ray"/>
    <property type="resolution" value="2.65 A"/>
    <property type="chains" value="A/B=429-647"/>
</dbReference>
<dbReference type="PDBsum" id="3QSQ"/>
<dbReference type="PDBsum" id="5IBV"/>
<dbReference type="PDBsum" id="7RK1"/>
<dbReference type="PDBsum" id="7RK2"/>
<dbReference type="SMR" id="Q9IFX1"/>
<dbReference type="DIP" id="DIP-59696N"/>
<dbReference type="ABCD" id="Q9IFX1">
    <property type="antibodies" value="2 sequenced antibodies"/>
</dbReference>
<dbReference type="EvolutionaryTrace" id="Q9IFX1"/>
<dbReference type="Proteomes" id="UP000008629">
    <property type="component" value="Genome"/>
</dbReference>
<dbReference type="GO" id="GO:0043655">
    <property type="term" value="C:host extracellular space"/>
    <property type="evidence" value="ECO:0007669"/>
    <property type="project" value="UniProtKB-SubCell"/>
</dbReference>
<dbReference type="GO" id="GO:0039617">
    <property type="term" value="C:T=3 icosahedral viral capsid"/>
    <property type="evidence" value="ECO:0000314"/>
    <property type="project" value="UniProtKB"/>
</dbReference>
<dbReference type="GO" id="GO:0042802">
    <property type="term" value="F:identical protein binding"/>
    <property type="evidence" value="ECO:0000353"/>
    <property type="project" value="IntAct"/>
</dbReference>
<dbReference type="GO" id="GO:0075512">
    <property type="term" value="P:clathrin-dependent endocytosis of virus by host cell"/>
    <property type="evidence" value="ECO:0000314"/>
    <property type="project" value="UniProtKB"/>
</dbReference>
<dbReference type="FunFam" id="2.60.120.20:FF:000007">
    <property type="entry name" value="Capsid polyprotein VP90"/>
    <property type="match status" value="1"/>
</dbReference>
<dbReference type="Gene3D" id="2.60.120.20">
    <property type="match status" value="1"/>
</dbReference>
<dbReference type="InterPro" id="IPR004337">
    <property type="entry name" value="Astro_capsid_N"/>
</dbReference>
<dbReference type="InterPro" id="IPR022027">
    <property type="entry name" value="Astro_capsid_p"/>
</dbReference>
<dbReference type="InterPro" id="IPR029053">
    <property type="entry name" value="Viral_coat"/>
</dbReference>
<dbReference type="Pfam" id="PF03115">
    <property type="entry name" value="Astro_capsid_N"/>
    <property type="match status" value="1"/>
</dbReference>
<dbReference type="Pfam" id="PF12226">
    <property type="entry name" value="Astro_capsid_p"/>
    <property type="match status" value="1"/>
</dbReference>
<protein>
    <recommendedName>
        <fullName>Capsid polyprotein VP90</fullName>
    </recommendedName>
    <component>
        <recommendedName>
            <fullName>Capsid polyprotein VP70</fullName>
        </recommendedName>
    </component>
    <component>
        <recommendedName>
            <fullName>Core protein VP34</fullName>
        </recommendedName>
    </component>
    <component>
        <recommendedName>
            <fullName>Spike protein VP27</fullName>
        </recommendedName>
    </component>
    <component>
        <recommendedName>
            <fullName>Spike protein VP25</fullName>
        </recommendedName>
    </component>
</protein>